<evidence type="ECO:0000250" key="1"/>
<evidence type="ECO:0000250" key="2">
    <source>
        <dbReference type="UniProtKB" id="P14137"/>
    </source>
</evidence>
<evidence type="ECO:0000250" key="3">
    <source>
        <dbReference type="UniProtKB" id="P15150"/>
    </source>
</evidence>
<evidence type="ECO:0000250" key="4">
    <source>
        <dbReference type="UniProtKB" id="P15538"/>
    </source>
</evidence>
<evidence type="ECO:0000250" key="5">
    <source>
        <dbReference type="UniProtKB" id="P19099"/>
    </source>
</evidence>
<evidence type="ECO:0000305" key="6"/>
<sequence>MAIWAKAEAWLAGPWLALNRARTLGTRAVLAPKGVLPFEAIPQFPGKKWMRVLQLWREQGFENNHLEMHQTFQELGPIFRFDVGGRNMVLVMLPEDVERCQKVEGLHPQRDVPGPWLAYRHLRGHKCGVFLLNGPTWRLDRLQLNPGVLSLQAMQKFTPLVDGVARDFSQALRARVMQNARGSLTLDIKPSIFRYTIEASNLVLFGERLGLLAHQPNPESLDFIHALEVMFKSTVQLMFMPRSLSRWTSTGTWKEHFEAWDCIFQYANKAIQRLYQELTLGHPWHYSGVVAELLTHANMTVDAIKANSIDLTAGSVDTTAYPLLMTLFELARNPEVQQALRQESLAAAARISENPQKAITELPLLRAALKETLRLYPVGIFLDRCVTSDLVLQNYHIPAGTLVKVLLYSLGRNPAVFARPERYHPQRWLDNQGSGTRFPHLAFGFGMRQCLGRRLAQVEMLLLLHHVLKNFLVETLVQEDIKMIYRFIMTPSTLPLLTFRAIS</sequence>
<name>C11B1_PIG</name>
<dbReference type="EC" id="1.14.15.4" evidence="3"/>
<dbReference type="EC" id="1.14.15.5" evidence="3"/>
<dbReference type="EMBL" id="D38590">
    <property type="protein sequence ID" value="BAA07600.1"/>
    <property type="molecule type" value="mRNA"/>
</dbReference>
<dbReference type="SMR" id="Q29552"/>
<dbReference type="FunCoup" id="Q29552">
    <property type="interactions" value="32"/>
</dbReference>
<dbReference type="STRING" id="9823.ENSSSCP00000043770"/>
<dbReference type="InParanoid" id="Q29552"/>
<dbReference type="UniPathway" id="UPA00788"/>
<dbReference type="Proteomes" id="UP000008227">
    <property type="component" value="Unplaced"/>
</dbReference>
<dbReference type="Proteomes" id="UP000314985">
    <property type="component" value="Unplaced"/>
</dbReference>
<dbReference type="Proteomes" id="UP000694570">
    <property type="component" value="Unplaced"/>
</dbReference>
<dbReference type="Proteomes" id="UP000694571">
    <property type="component" value="Unplaced"/>
</dbReference>
<dbReference type="Proteomes" id="UP000694720">
    <property type="component" value="Unplaced"/>
</dbReference>
<dbReference type="Proteomes" id="UP000694722">
    <property type="component" value="Unplaced"/>
</dbReference>
<dbReference type="Proteomes" id="UP000694723">
    <property type="component" value="Unplaced"/>
</dbReference>
<dbReference type="Proteomes" id="UP000694724">
    <property type="component" value="Unplaced"/>
</dbReference>
<dbReference type="Proteomes" id="UP000694725">
    <property type="component" value="Unplaced"/>
</dbReference>
<dbReference type="Proteomes" id="UP000694726">
    <property type="component" value="Unplaced"/>
</dbReference>
<dbReference type="Proteomes" id="UP000694727">
    <property type="component" value="Unplaced"/>
</dbReference>
<dbReference type="Proteomes" id="UP000694728">
    <property type="component" value="Unplaced"/>
</dbReference>
<dbReference type="GO" id="GO:0005743">
    <property type="term" value="C:mitochondrial inner membrane"/>
    <property type="evidence" value="ECO:0000318"/>
    <property type="project" value="GO_Central"/>
</dbReference>
<dbReference type="GO" id="GO:0047783">
    <property type="term" value="F:corticosterone 18-monooxygenase activity"/>
    <property type="evidence" value="ECO:0000318"/>
    <property type="project" value="GO_Central"/>
</dbReference>
<dbReference type="GO" id="GO:0020037">
    <property type="term" value="F:heme binding"/>
    <property type="evidence" value="ECO:0007669"/>
    <property type="project" value="InterPro"/>
</dbReference>
<dbReference type="GO" id="GO:0005506">
    <property type="term" value="F:iron ion binding"/>
    <property type="evidence" value="ECO:0007669"/>
    <property type="project" value="InterPro"/>
</dbReference>
<dbReference type="GO" id="GO:0004507">
    <property type="term" value="F:steroid 11-beta-monooxygenase activity"/>
    <property type="evidence" value="ECO:0000318"/>
    <property type="project" value="GO_Central"/>
</dbReference>
<dbReference type="GO" id="GO:0032342">
    <property type="term" value="P:aldosterone biosynthetic process"/>
    <property type="evidence" value="ECO:0000318"/>
    <property type="project" value="GO_Central"/>
</dbReference>
<dbReference type="GO" id="GO:0071375">
    <property type="term" value="P:cellular response to peptide hormone stimulus"/>
    <property type="evidence" value="ECO:0000318"/>
    <property type="project" value="GO_Central"/>
</dbReference>
<dbReference type="GO" id="GO:0008203">
    <property type="term" value="P:cholesterol metabolic process"/>
    <property type="evidence" value="ECO:0000318"/>
    <property type="project" value="GO_Central"/>
</dbReference>
<dbReference type="GO" id="GO:0034650">
    <property type="term" value="P:cortisol metabolic process"/>
    <property type="evidence" value="ECO:0000318"/>
    <property type="project" value="GO_Central"/>
</dbReference>
<dbReference type="GO" id="GO:0006704">
    <property type="term" value="P:glucocorticoid biosynthetic process"/>
    <property type="evidence" value="ECO:0000318"/>
    <property type="project" value="GO_Central"/>
</dbReference>
<dbReference type="FunFam" id="1.10.630.10:FF:000015">
    <property type="entry name" value="Cholesterol side-chain cleavage enzyme, mitochondrial"/>
    <property type="match status" value="1"/>
</dbReference>
<dbReference type="Gene3D" id="1.10.630.10">
    <property type="entry name" value="Cytochrome P450"/>
    <property type="match status" value="1"/>
</dbReference>
<dbReference type="InterPro" id="IPR050479">
    <property type="entry name" value="CYP11_CYP27_families"/>
</dbReference>
<dbReference type="InterPro" id="IPR001128">
    <property type="entry name" value="Cyt_P450"/>
</dbReference>
<dbReference type="InterPro" id="IPR017972">
    <property type="entry name" value="Cyt_P450_CS"/>
</dbReference>
<dbReference type="InterPro" id="IPR002401">
    <property type="entry name" value="Cyt_P450_E_grp-I"/>
</dbReference>
<dbReference type="InterPro" id="IPR036396">
    <property type="entry name" value="Cyt_P450_sf"/>
</dbReference>
<dbReference type="PANTHER" id="PTHR24279">
    <property type="entry name" value="CYTOCHROME P450"/>
    <property type="match status" value="1"/>
</dbReference>
<dbReference type="PANTHER" id="PTHR24279:SF1">
    <property type="entry name" value="CYTOCHROME P450 11B2, MITOCHONDRIAL"/>
    <property type="match status" value="1"/>
</dbReference>
<dbReference type="Pfam" id="PF00067">
    <property type="entry name" value="p450"/>
    <property type="match status" value="1"/>
</dbReference>
<dbReference type="PRINTS" id="PR00463">
    <property type="entry name" value="EP450I"/>
</dbReference>
<dbReference type="PRINTS" id="PR00385">
    <property type="entry name" value="P450"/>
</dbReference>
<dbReference type="SUPFAM" id="SSF48264">
    <property type="entry name" value="Cytochrome P450"/>
    <property type="match status" value="1"/>
</dbReference>
<dbReference type="PROSITE" id="PS00086">
    <property type="entry name" value="CYTOCHROME_P450"/>
    <property type="match status" value="1"/>
</dbReference>
<gene>
    <name type="primary">CYP11B1</name>
</gene>
<feature type="transit peptide" description="Mitochondrion" evidence="1">
    <location>
        <begin position="1"/>
        <end position="24"/>
    </location>
</feature>
<feature type="chain" id="PRO_0000003602" description="Cytochrome P450 11B1, mitochondrial">
    <location>
        <begin position="25"/>
        <end position="503"/>
    </location>
</feature>
<feature type="binding site" description="axial binding residue" evidence="5">
    <location>
        <position position="450"/>
    </location>
    <ligand>
        <name>heme</name>
        <dbReference type="ChEBI" id="CHEBI:30413"/>
    </ligand>
    <ligandPart>
        <name>Fe</name>
        <dbReference type="ChEBI" id="CHEBI:18248"/>
    </ligandPart>
</feature>
<accession>Q29552</accession>
<reference key="1">
    <citation type="journal article" date="1995" name="J. Steroid Biochem. Mol. Biol.">
        <title>Cloning and expression of cytochrome P450(11 beta) of porcine adrenal cortex.</title>
        <authorList>
            <person name="Sun T."/>
            <person name="Zhao Y."/>
            <person name="Nonaka Y."/>
            <person name="Okamoto M."/>
        </authorList>
    </citation>
    <scope>NUCLEOTIDE SEQUENCE [MRNA]</scope>
    <source>
        <tissue>Adrenal gland</tissue>
    </source>
</reference>
<keyword id="KW-0349">Heme</keyword>
<keyword id="KW-0408">Iron</keyword>
<keyword id="KW-0472">Membrane</keyword>
<keyword id="KW-0479">Metal-binding</keyword>
<keyword id="KW-0496">Mitochondrion</keyword>
<keyword id="KW-0999">Mitochondrion inner membrane</keyword>
<keyword id="KW-0503">Monooxygenase</keyword>
<keyword id="KW-0560">Oxidoreductase</keyword>
<keyword id="KW-1185">Reference proteome</keyword>
<keyword id="KW-0755">Steroidogenesis</keyword>
<keyword id="KW-0809">Transit peptide</keyword>
<proteinExistence type="evidence at transcript level"/>
<protein>
    <recommendedName>
        <fullName>Cytochrome P450 11B1, mitochondrial</fullName>
    </recommendedName>
    <alternativeName>
        <fullName>CYPXIB1</fullName>
    </alternativeName>
    <alternativeName>
        <fullName>Cytochrome P450C11</fullName>
    </alternativeName>
    <alternativeName>
        <fullName evidence="3">Steroid 11-beta-hydroxylase, CYP11B1</fullName>
        <ecNumber evidence="3">1.14.15.4</ecNumber>
        <ecNumber evidence="3">1.14.15.5</ecNumber>
    </alternativeName>
</protein>
<organism>
    <name type="scientific">Sus scrofa</name>
    <name type="common">Pig</name>
    <dbReference type="NCBI Taxonomy" id="9823"/>
    <lineage>
        <taxon>Eukaryota</taxon>
        <taxon>Metazoa</taxon>
        <taxon>Chordata</taxon>
        <taxon>Craniata</taxon>
        <taxon>Vertebrata</taxon>
        <taxon>Euteleostomi</taxon>
        <taxon>Mammalia</taxon>
        <taxon>Eutheria</taxon>
        <taxon>Laurasiatheria</taxon>
        <taxon>Artiodactyla</taxon>
        <taxon>Suina</taxon>
        <taxon>Suidae</taxon>
        <taxon>Sus</taxon>
    </lineage>
</organism>
<comment type="function">
    <text evidence="3">A cytochrome P450 monooxygenase that catalyzes the biosynthesis of aldosterone and other adrenal corticoids. Differing from other species (such as human, rat and mice), it is able to catalyze three sequential oxidative reactions of 11-deoxycorticosterone (21-hydroxyprogesterone), namely 11-beta hydroxylation, followed by two successive oxidations at C18 yielding 18-hydroxy and then 18-oxo intermediates, and ending with the formation of aldosterone. Steroid 11beta, 18- and 19-hydroxylase. Mechanistically, uses molecular oxygen inserting one oxygen atom into a substrate and reducing the second into a water molecule. Two electrons are provided by NADPH via a two-protein mitochondrial transfer system comprising flavoprotein FDXR (adrenodoxin/ferredoxin reductase) and nonheme iron-sulfur protein FDX1 or FDX2 (adrenodoxin/ferredoxin).</text>
</comment>
<comment type="catalytic activity">
    <reaction evidence="3">
        <text>a steroid + 2 reduced [adrenodoxin] + O2 + 2 H(+) = an 11beta-hydroxysteroid + 2 oxidized [adrenodoxin] + H2O</text>
        <dbReference type="Rhea" id="RHEA:15629"/>
        <dbReference type="Rhea" id="RHEA-COMP:9998"/>
        <dbReference type="Rhea" id="RHEA-COMP:9999"/>
        <dbReference type="ChEBI" id="CHEBI:15377"/>
        <dbReference type="ChEBI" id="CHEBI:15378"/>
        <dbReference type="ChEBI" id="CHEBI:15379"/>
        <dbReference type="ChEBI" id="CHEBI:33737"/>
        <dbReference type="ChEBI" id="CHEBI:33738"/>
        <dbReference type="ChEBI" id="CHEBI:35341"/>
        <dbReference type="ChEBI" id="CHEBI:35346"/>
        <dbReference type="EC" id="1.14.15.4"/>
    </reaction>
    <physiologicalReaction direction="left-to-right" evidence="3">
        <dbReference type="Rhea" id="RHEA:15630"/>
    </physiologicalReaction>
</comment>
<comment type="catalytic activity">
    <reaction evidence="4">
        <text>11-deoxycortisol + 2 reduced [adrenodoxin] + O2 + 2 H(+) = cortisol + 2 oxidized [adrenodoxin] + H2O</text>
        <dbReference type="Rhea" id="RHEA:46100"/>
        <dbReference type="Rhea" id="RHEA-COMP:9998"/>
        <dbReference type="Rhea" id="RHEA-COMP:9999"/>
        <dbReference type="ChEBI" id="CHEBI:15377"/>
        <dbReference type="ChEBI" id="CHEBI:15378"/>
        <dbReference type="ChEBI" id="CHEBI:15379"/>
        <dbReference type="ChEBI" id="CHEBI:17650"/>
        <dbReference type="ChEBI" id="CHEBI:28324"/>
        <dbReference type="ChEBI" id="CHEBI:33737"/>
        <dbReference type="ChEBI" id="CHEBI:33738"/>
    </reaction>
    <physiologicalReaction direction="left-to-right" evidence="4">
        <dbReference type="Rhea" id="RHEA:46101"/>
    </physiologicalReaction>
</comment>
<comment type="catalytic activity">
    <reaction evidence="3">
        <text>21-hydroxyprogesterone + 2 reduced [adrenodoxin] + O2 + 2 H(+) = corticosterone + 2 oxidized [adrenodoxin] + H2O</text>
        <dbReference type="Rhea" id="RHEA:46104"/>
        <dbReference type="Rhea" id="RHEA-COMP:9998"/>
        <dbReference type="Rhea" id="RHEA-COMP:9999"/>
        <dbReference type="ChEBI" id="CHEBI:15377"/>
        <dbReference type="ChEBI" id="CHEBI:15378"/>
        <dbReference type="ChEBI" id="CHEBI:15379"/>
        <dbReference type="ChEBI" id="CHEBI:16827"/>
        <dbReference type="ChEBI" id="CHEBI:16973"/>
        <dbReference type="ChEBI" id="CHEBI:33737"/>
        <dbReference type="ChEBI" id="CHEBI:33738"/>
    </reaction>
    <physiologicalReaction direction="left-to-right" evidence="3">
        <dbReference type="Rhea" id="RHEA:46105"/>
    </physiologicalReaction>
</comment>
<comment type="catalytic activity">
    <reaction evidence="3">
        <text>corticosterone + 2 reduced [adrenodoxin] + O2 + 2 H(+) = 18-hydroxycorticosterone + 2 oxidized [adrenodoxin] + H2O</text>
        <dbReference type="Rhea" id="RHEA:11872"/>
        <dbReference type="Rhea" id="RHEA-COMP:9998"/>
        <dbReference type="Rhea" id="RHEA-COMP:9999"/>
        <dbReference type="ChEBI" id="CHEBI:15377"/>
        <dbReference type="ChEBI" id="CHEBI:15378"/>
        <dbReference type="ChEBI" id="CHEBI:15379"/>
        <dbReference type="ChEBI" id="CHEBI:16485"/>
        <dbReference type="ChEBI" id="CHEBI:16827"/>
        <dbReference type="ChEBI" id="CHEBI:33737"/>
        <dbReference type="ChEBI" id="CHEBI:33738"/>
        <dbReference type="EC" id="1.14.15.5"/>
    </reaction>
    <physiologicalReaction direction="left-to-right" evidence="3">
        <dbReference type="Rhea" id="RHEA:11873"/>
    </physiologicalReaction>
</comment>
<comment type="catalytic activity">
    <reaction evidence="3">
        <text>18-hydroxycorticosterone + 2 reduced [adrenodoxin] + O2 + 2 H(+) = aldosterone + 2 oxidized [adrenodoxin] + 2 H2O</text>
        <dbReference type="Rhea" id="RHEA:50792"/>
        <dbReference type="Rhea" id="RHEA-COMP:9998"/>
        <dbReference type="Rhea" id="RHEA-COMP:9999"/>
        <dbReference type="ChEBI" id="CHEBI:15377"/>
        <dbReference type="ChEBI" id="CHEBI:15378"/>
        <dbReference type="ChEBI" id="CHEBI:15379"/>
        <dbReference type="ChEBI" id="CHEBI:16485"/>
        <dbReference type="ChEBI" id="CHEBI:27584"/>
        <dbReference type="ChEBI" id="CHEBI:33737"/>
        <dbReference type="ChEBI" id="CHEBI:33738"/>
    </reaction>
    <physiologicalReaction direction="left-to-right" evidence="3">
        <dbReference type="Rhea" id="RHEA:50793"/>
    </physiologicalReaction>
</comment>
<comment type="catalytic activity">
    <reaction evidence="3">
        <text>21-hydroxyprogesterone + 2 reduced [adrenodoxin] + O2 + 2 H(+) = 19-hydroxy-11-deoxycorticosterone + 2 oxidized [adrenodoxin] + H2O</text>
        <dbReference type="Rhea" id="RHEA:76155"/>
        <dbReference type="Rhea" id="RHEA-COMP:9998"/>
        <dbReference type="Rhea" id="RHEA-COMP:9999"/>
        <dbReference type="ChEBI" id="CHEBI:15377"/>
        <dbReference type="ChEBI" id="CHEBI:15378"/>
        <dbReference type="ChEBI" id="CHEBI:15379"/>
        <dbReference type="ChEBI" id="CHEBI:16973"/>
        <dbReference type="ChEBI" id="CHEBI:33737"/>
        <dbReference type="ChEBI" id="CHEBI:33738"/>
        <dbReference type="ChEBI" id="CHEBI:195167"/>
    </reaction>
    <physiologicalReaction direction="left-to-right" evidence="3">
        <dbReference type="Rhea" id="RHEA:76156"/>
    </physiologicalReaction>
</comment>
<comment type="catalytic activity">
    <reaction evidence="3">
        <text>19-hydroxy-11-deoxycorticosterone + 2 reduced [adrenodoxin] + O2 + 2 H(+) = 19-oxo-11-deoxycorticosterone + 2 oxidized [adrenodoxin] + 2 H2O</text>
        <dbReference type="Rhea" id="RHEA:76439"/>
        <dbReference type="Rhea" id="RHEA-COMP:9998"/>
        <dbReference type="Rhea" id="RHEA-COMP:9999"/>
        <dbReference type="ChEBI" id="CHEBI:15377"/>
        <dbReference type="ChEBI" id="CHEBI:15378"/>
        <dbReference type="ChEBI" id="CHEBI:15379"/>
        <dbReference type="ChEBI" id="CHEBI:33737"/>
        <dbReference type="ChEBI" id="CHEBI:33738"/>
        <dbReference type="ChEBI" id="CHEBI:174650"/>
        <dbReference type="ChEBI" id="CHEBI:195167"/>
    </reaction>
    <physiologicalReaction direction="left-to-right" evidence="3">
        <dbReference type="Rhea" id="RHEA:76440"/>
    </physiologicalReaction>
</comment>
<comment type="cofactor">
    <cofactor evidence="5">
        <name>heme</name>
        <dbReference type="ChEBI" id="CHEBI:30413"/>
    </cofactor>
</comment>
<comment type="pathway">
    <text evidence="4">Steroid biosynthesis; glucocorticoid biosynthesis.</text>
</comment>
<comment type="pathway">
    <text evidence="4">Steroid hormone biosynthesis.</text>
</comment>
<comment type="subcellular location">
    <subcellularLocation>
        <location evidence="2">Mitochondrion inner membrane</location>
        <topology evidence="2">Peripheral membrane protein</topology>
    </subcellularLocation>
</comment>
<comment type="similarity">
    <text evidence="6">Belongs to the cytochrome P450 family.</text>
</comment>